<accession>Q9BQE6</accession>
<accession>Q96NA4</accession>
<name>LBHD1_HUMAN</name>
<protein>
    <recommendedName>
        <fullName evidence="5">LBH domain-containing protein 1</fullName>
    </recommendedName>
</protein>
<keyword id="KW-0025">Alternative splicing</keyword>
<keyword id="KW-1267">Proteomics identification</keyword>
<keyword id="KW-1185">Reference proteome</keyword>
<gene>
    <name evidence="6" type="primary">LBHD1</name>
    <name evidence="6" type="synonym">C11orf48</name>
</gene>
<sequence length="289" mass="31565">MALVPGRSKEDGLWTRNSPGSSQHPESPRLPNPLWDRGKIGKVEGHQHIQVSTSSACVWQLAYPPVWPNLPAVPIQDFSQKSHLPSIVVESSEVNEESGDLHLPHEELLLLTDGEEEDAEAFFQDQSEEPGWAWSPQDPRSPLRTFNAGLSWGQDQDEEDACWILEDTACLEATNHCPFWDSTGSRVCRSGFVEYSHLLPPNSFEGAEEEAVQTPAGVESGAASEAPGGRGCDRPRADHAAPPQEAGVQCTCQHYTVREEAQKTPPADPACPEREDSHGSGSPFKASQD</sequence>
<organism>
    <name type="scientific">Homo sapiens</name>
    <name type="common">Human</name>
    <dbReference type="NCBI Taxonomy" id="9606"/>
    <lineage>
        <taxon>Eukaryota</taxon>
        <taxon>Metazoa</taxon>
        <taxon>Chordata</taxon>
        <taxon>Craniata</taxon>
        <taxon>Vertebrata</taxon>
        <taxon>Euteleostomi</taxon>
        <taxon>Mammalia</taxon>
        <taxon>Eutheria</taxon>
        <taxon>Euarchontoglires</taxon>
        <taxon>Primates</taxon>
        <taxon>Haplorrhini</taxon>
        <taxon>Catarrhini</taxon>
        <taxon>Hominidae</taxon>
        <taxon>Homo</taxon>
    </lineage>
</organism>
<evidence type="ECO:0000255" key="1"/>
<evidence type="ECO:0000256" key="2">
    <source>
        <dbReference type="SAM" id="MobiDB-lite"/>
    </source>
</evidence>
<evidence type="ECO:0000269" key="3">
    <source>
    </source>
</evidence>
<evidence type="ECO:0000303" key="4">
    <source>
    </source>
</evidence>
<evidence type="ECO:0000305" key="5"/>
<evidence type="ECO:0000312" key="6">
    <source>
        <dbReference type="HGNC" id="HGNC:28351"/>
    </source>
</evidence>
<comment type="interaction">
    <interactant intactId="EBI-12277798">
        <id>Q9BQE6-2</id>
    </interactant>
    <interactant intactId="EBI-1044491">
        <id>P48444</id>
        <label>ARCN1</label>
    </interactant>
    <organismsDiffer>false</organismsDiffer>
    <experiments>3</experiments>
</comment>
<comment type="alternative products">
    <event type="alternative splicing"/>
    <isoform>
        <id>Q9BQE6-1</id>
        <name>1</name>
        <sequence type="displayed"/>
    </isoform>
    <isoform>
        <id>Q9BQE6-2</id>
        <name>2</name>
        <sequence type="described" ref="VSP_024545"/>
    </isoform>
</comment>
<comment type="tissue specificity">
    <text evidence="3">Expressed in bladder cancer tissues (at protein level).</text>
</comment>
<feature type="chain" id="PRO_0000284493" description="LBH domain-containing protein 1">
    <location>
        <begin position="1"/>
        <end position="289"/>
    </location>
</feature>
<feature type="domain" description="LBH" evidence="1">
    <location>
        <begin position="1"/>
        <end position="128"/>
    </location>
</feature>
<feature type="region of interest" description="Disordered" evidence="2">
    <location>
        <begin position="1"/>
        <end position="36"/>
    </location>
</feature>
<feature type="region of interest" description="Disordered" evidence="2">
    <location>
        <begin position="205"/>
        <end position="289"/>
    </location>
</feature>
<feature type="compositionally biased region" description="Polar residues" evidence="2">
    <location>
        <begin position="15"/>
        <end position="25"/>
    </location>
</feature>
<feature type="splice variant" id="VSP_024545" description="In isoform 2." evidence="4">
    <location>
        <begin position="51"/>
        <end position="76"/>
    </location>
</feature>
<reference key="1">
    <citation type="journal article" date="2004" name="Nat. Genet.">
        <title>Complete sequencing and characterization of 21,243 full-length human cDNAs.</title>
        <authorList>
            <person name="Ota T."/>
            <person name="Suzuki Y."/>
            <person name="Nishikawa T."/>
            <person name="Otsuki T."/>
            <person name="Sugiyama T."/>
            <person name="Irie R."/>
            <person name="Wakamatsu A."/>
            <person name="Hayashi K."/>
            <person name="Sato H."/>
            <person name="Nagai K."/>
            <person name="Kimura K."/>
            <person name="Makita H."/>
            <person name="Sekine M."/>
            <person name="Obayashi M."/>
            <person name="Nishi T."/>
            <person name="Shibahara T."/>
            <person name="Tanaka T."/>
            <person name="Ishii S."/>
            <person name="Yamamoto J."/>
            <person name="Saito K."/>
            <person name="Kawai Y."/>
            <person name="Isono Y."/>
            <person name="Nakamura Y."/>
            <person name="Nagahari K."/>
            <person name="Murakami K."/>
            <person name="Yasuda T."/>
            <person name="Iwayanagi T."/>
            <person name="Wagatsuma M."/>
            <person name="Shiratori A."/>
            <person name="Sudo H."/>
            <person name="Hosoiri T."/>
            <person name="Kaku Y."/>
            <person name="Kodaira H."/>
            <person name="Kondo H."/>
            <person name="Sugawara M."/>
            <person name="Takahashi M."/>
            <person name="Kanda K."/>
            <person name="Yokoi T."/>
            <person name="Furuya T."/>
            <person name="Kikkawa E."/>
            <person name="Omura Y."/>
            <person name="Abe K."/>
            <person name="Kamihara K."/>
            <person name="Katsuta N."/>
            <person name="Sato K."/>
            <person name="Tanikawa M."/>
            <person name="Yamazaki M."/>
            <person name="Ninomiya K."/>
            <person name="Ishibashi T."/>
            <person name="Yamashita H."/>
            <person name="Murakawa K."/>
            <person name="Fujimori K."/>
            <person name="Tanai H."/>
            <person name="Kimata M."/>
            <person name="Watanabe M."/>
            <person name="Hiraoka S."/>
            <person name="Chiba Y."/>
            <person name="Ishida S."/>
            <person name="Ono Y."/>
            <person name="Takiguchi S."/>
            <person name="Watanabe S."/>
            <person name="Yosida M."/>
            <person name="Hotuta T."/>
            <person name="Kusano J."/>
            <person name="Kanehori K."/>
            <person name="Takahashi-Fujii A."/>
            <person name="Hara H."/>
            <person name="Tanase T.-O."/>
            <person name="Nomura Y."/>
            <person name="Togiya S."/>
            <person name="Komai F."/>
            <person name="Hara R."/>
            <person name="Takeuchi K."/>
            <person name="Arita M."/>
            <person name="Imose N."/>
            <person name="Musashino K."/>
            <person name="Yuuki H."/>
            <person name="Oshima A."/>
            <person name="Sasaki N."/>
            <person name="Aotsuka S."/>
            <person name="Yoshikawa Y."/>
            <person name="Matsunawa H."/>
            <person name="Ichihara T."/>
            <person name="Shiohata N."/>
            <person name="Sano S."/>
            <person name="Moriya S."/>
            <person name="Momiyama H."/>
            <person name="Satoh N."/>
            <person name="Takami S."/>
            <person name="Terashima Y."/>
            <person name="Suzuki O."/>
            <person name="Nakagawa S."/>
            <person name="Senoh A."/>
            <person name="Mizoguchi H."/>
            <person name="Goto Y."/>
            <person name="Shimizu F."/>
            <person name="Wakebe H."/>
            <person name="Hishigaki H."/>
            <person name="Watanabe T."/>
            <person name="Sugiyama A."/>
            <person name="Takemoto M."/>
            <person name="Kawakami B."/>
            <person name="Yamazaki M."/>
            <person name="Watanabe K."/>
            <person name="Kumagai A."/>
            <person name="Itakura S."/>
            <person name="Fukuzumi Y."/>
            <person name="Fujimori Y."/>
            <person name="Komiyama M."/>
            <person name="Tashiro H."/>
            <person name="Tanigami A."/>
            <person name="Fujiwara T."/>
            <person name="Ono T."/>
            <person name="Yamada K."/>
            <person name="Fujii Y."/>
            <person name="Ozaki K."/>
            <person name="Hirao M."/>
            <person name="Ohmori Y."/>
            <person name="Kawabata A."/>
            <person name="Hikiji T."/>
            <person name="Kobatake N."/>
            <person name="Inagaki H."/>
            <person name="Ikema Y."/>
            <person name="Okamoto S."/>
            <person name="Okitani R."/>
            <person name="Kawakami T."/>
            <person name="Noguchi S."/>
            <person name="Itoh T."/>
            <person name="Shigeta K."/>
            <person name="Senba T."/>
            <person name="Matsumura K."/>
            <person name="Nakajima Y."/>
            <person name="Mizuno T."/>
            <person name="Morinaga M."/>
            <person name="Sasaki M."/>
            <person name="Togashi T."/>
            <person name="Oyama M."/>
            <person name="Hata H."/>
            <person name="Watanabe M."/>
            <person name="Komatsu T."/>
            <person name="Mizushima-Sugano J."/>
            <person name="Satoh T."/>
            <person name="Shirai Y."/>
            <person name="Takahashi Y."/>
            <person name="Nakagawa K."/>
            <person name="Okumura K."/>
            <person name="Nagase T."/>
            <person name="Nomura N."/>
            <person name="Kikuchi H."/>
            <person name="Masuho Y."/>
            <person name="Yamashita R."/>
            <person name="Nakai K."/>
            <person name="Yada T."/>
            <person name="Nakamura Y."/>
            <person name="Ohara O."/>
            <person name="Isogai T."/>
            <person name="Sugano S."/>
        </authorList>
    </citation>
    <scope>NUCLEOTIDE SEQUENCE [LARGE SCALE MRNA] (ISOFORM 1)</scope>
    <source>
        <tissue>Kidney</tissue>
    </source>
</reference>
<reference key="2">
    <citation type="journal article" date="2004" name="Genome Res.">
        <title>The status, quality, and expansion of the NIH full-length cDNA project: the Mammalian Gene Collection (MGC).</title>
        <authorList>
            <consortium name="The MGC Project Team"/>
        </authorList>
    </citation>
    <scope>NUCLEOTIDE SEQUENCE [LARGE SCALE MRNA] (ISOFORM 2)</scope>
    <source>
        <tissue>Placenta</tissue>
    </source>
</reference>
<reference key="3">
    <citation type="journal article" date="2009" name="World J. Urol.">
        <title>Immunoscreening of urinary bladder cancer cDNA library and identification of potential tumor antigen.</title>
        <authorList>
            <person name="Chen L."/>
            <person name="Chen W."/>
            <person name="Zhao L."/>
            <person name="Yu H.Z."/>
            <person name="Li X."/>
        </authorList>
    </citation>
    <scope>TISSUE SPECIFICITY</scope>
</reference>
<proteinExistence type="evidence at protein level"/>
<dbReference type="EMBL" id="AK055736">
    <property type="status" value="NOT_ANNOTATED_CDS"/>
    <property type="molecule type" value="mRNA"/>
</dbReference>
<dbReference type="EMBL" id="BC001434">
    <property type="protein sequence ID" value="AAH01434.2"/>
    <property type="molecule type" value="mRNA"/>
</dbReference>
<dbReference type="CCDS" id="CCDS8028.1">
    <molecule id="Q9BQE6-2"/>
</dbReference>
<dbReference type="CCDS" id="CCDS91492.1">
    <molecule id="Q9BQE6-1"/>
</dbReference>
<dbReference type="RefSeq" id="NP_001354869.1">
    <molecule id="Q9BQE6-1"/>
    <property type="nucleotide sequence ID" value="NM_001367940.2"/>
</dbReference>
<dbReference type="RefSeq" id="NP_001354870.1">
    <molecule id="Q9BQE6-2"/>
    <property type="nucleotide sequence ID" value="NM_001367941.2"/>
</dbReference>
<dbReference type="RefSeq" id="NP_001381538.1">
    <molecule id="Q9BQE6-2"/>
    <property type="nucleotide sequence ID" value="NM_001394609.1"/>
</dbReference>
<dbReference type="RefSeq" id="NP_001381540.1">
    <molecule id="Q9BQE6-2"/>
    <property type="nucleotide sequence ID" value="NM_001394611.1"/>
</dbReference>
<dbReference type="RefSeq" id="NP_001381541.1">
    <molecule id="Q9BQE6-2"/>
    <property type="nucleotide sequence ID" value="NM_001394612.1"/>
</dbReference>
<dbReference type="RefSeq" id="NP_077004.2">
    <molecule id="Q9BQE6-2"/>
    <property type="nucleotide sequence ID" value="NM_024099.3"/>
</dbReference>
<dbReference type="BioGRID" id="122530">
    <property type="interactions" value="15"/>
</dbReference>
<dbReference type="FunCoup" id="Q9BQE6">
    <property type="interactions" value="249"/>
</dbReference>
<dbReference type="IntAct" id="Q9BQE6">
    <property type="interactions" value="11"/>
</dbReference>
<dbReference type="STRING" id="9606.ENSP00000436848"/>
<dbReference type="iPTMnet" id="Q9BQE6"/>
<dbReference type="PhosphoSitePlus" id="Q9BQE6"/>
<dbReference type="BioMuta" id="LBHD1"/>
<dbReference type="DMDM" id="145558878"/>
<dbReference type="jPOST" id="Q9BQE6"/>
<dbReference type="MassIVE" id="Q9BQE6"/>
<dbReference type="PaxDb" id="9606-ENSP00000436848"/>
<dbReference type="PeptideAtlas" id="Q9BQE6"/>
<dbReference type="ProteomicsDB" id="78664">
    <molecule id="Q9BQE6-1"/>
</dbReference>
<dbReference type="ProteomicsDB" id="78665">
    <molecule id="Q9BQE6-2"/>
</dbReference>
<dbReference type="Antibodypedia" id="1592">
    <property type="antibodies" value="27 antibodies from 13 providers"/>
</dbReference>
<dbReference type="DNASU" id="79081"/>
<dbReference type="Ensembl" id="ENST00000354588.8">
    <molecule id="Q9BQE6-2"/>
    <property type="protein sequence ID" value="ENSP00000346600.3"/>
    <property type="gene ID" value="ENSG00000162194.13"/>
</dbReference>
<dbReference type="Ensembl" id="ENST00000431002.6">
    <molecule id="Q9BQE6-1"/>
    <property type="protein sequence ID" value="ENSP00000416856.2"/>
    <property type="gene ID" value="ENSG00000162194.13"/>
</dbReference>
<dbReference type="Ensembl" id="ENST00000532208.5">
    <molecule id="Q9BQE6-2"/>
    <property type="protein sequence ID" value="ENSP00000436848.1"/>
    <property type="gene ID" value="ENSG00000162194.13"/>
</dbReference>
<dbReference type="GeneID" id="79081"/>
<dbReference type="KEGG" id="hsa:79081"/>
<dbReference type="MANE-Select" id="ENST00000354588.8">
    <molecule id="Q9BQE6-2"/>
    <property type="protein sequence ID" value="ENSP00000346600.3"/>
    <property type="RefSeq nucleotide sequence ID" value="NM_024099.5"/>
    <property type="RefSeq protein sequence ID" value="NP_077004.2"/>
</dbReference>
<dbReference type="UCSC" id="uc001nuf.3">
    <molecule id="Q9BQE6-1"/>
    <property type="organism name" value="human"/>
</dbReference>
<dbReference type="AGR" id="HGNC:28351"/>
<dbReference type="CTD" id="79081"/>
<dbReference type="DisGeNET" id="79081"/>
<dbReference type="GeneCards" id="LBHD1"/>
<dbReference type="HGNC" id="HGNC:28351">
    <property type="gene designation" value="LBHD1"/>
</dbReference>
<dbReference type="HPA" id="ENSG00000162194">
    <property type="expression patterns" value="Tissue enriched (retina)"/>
</dbReference>
<dbReference type="MalaCards" id="LBHD1"/>
<dbReference type="neXtProt" id="NX_Q9BQE6"/>
<dbReference type="OpenTargets" id="ENSG00000162194"/>
<dbReference type="PharmGKB" id="PA142672293"/>
<dbReference type="VEuPathDB" id="HostDB:ENSG00000162194"/>
<dbReference type="eggNOG" id="ENOG502TCS0">
    <property type="taxonomic scope" value="Eukaryota"/>
</dbReference>
<dbReference type="GeneTree" id="ENSGT00400000022873"/>
<dbReference type="HOGENOM" id="CLU_095191_0_0_1"/>
<dbReference type="InParanoid" id="Q9BQE6"/>
<dbReference type="OMA" id="RFVEYSH"/>
<dbReference type="OrthoDB" id="9837233at2759"/>
<dbReference type="PAN-GO" id="Q9BQE6">
    <property type="GO annotations" value="2 GO annotations based on evolutionary models"/>
</dbReference>
<dbReference type="PhylomeDB" id="Q9BQE6"/>
<dbReference type="PathwayCommons" id="Q9BQE6"/>
<dbReference type="SignaLink" id="Q9BQE6"/>
<dbReference type="BioGRID-ORCS" id="79081">
    <property type="hits" value="4 hits in 154 CRISPR screens"/>
</dbReference>
<dbReference type="CD-CODE" id="91857CE7">
    <property type="entry name" value="Nucleolus"/>
</dbReference>
<dbReference type="ChiTaRS" id="LBHD1">
    <property type="organism name" value="human"/>
</dbReference>
<dbReference type="GenomeRNAi" id="79081"/>
<dbReference type="Pharos" id="Q9BQE6">
    <property type="development level" value="Tdark"/>
</dbReference>
<dbReference type="PRO" id="PR:Q9BQE6"/>
<dbReference type="Proteomes" id="UP000005640">
    <property type="component" value="Chromosome 11"/>
</dbReference>
<dbReference type="RNAct" id="Q9BQE6">
    <property type="molecule type" value="protein"/>
</dbReference>
<dbReference type="Bgee" id="ENSG00000162194">
    <property type="expression patterns" value="Expressed in granulocyte and 97 other cell types or tissues"/>
</dbReference>
<dbReference type="ExpressionAtlas" id="Q9BQE6">
    <property type="expression patterns" value="baseline and differential"/>
</dbReference>
<dbReference type="GO" id="GO:0005634">
    <property type="term" value="C:nucleus"/>
    <property type="evidence" value="ECO:0000318"/>
    <property type="project" value="GO_Central"/>
</dbReference>
<dbReference type="GO" id="GO:0045893">
    <property type="term" value="P:positive regulation of DNA-templated transcription"/>
    <property type="evidence" value="ECO:0000318"/>
    <property type="project" value="GO_Central"/>
</dbReference>
<dbReference type="InterPro" id="IPR038990">
    <property type="entry name" value="LBH_dom"/>
</dbReference>
<dbReference type="InterPro" id="IPR042945">
    <property type="entry name" value="LBH_dom_prot"/>
</dbReference>
<dbReference type="PANTHER" id="PTHR14987:SF1">
    <property type="entry name" value="LBH DOMAIN-CONTAINING PROTEIN 1"/>
    <property type="match status" value="1"/>
</dbReference>
<dbReference type="PANTHER" id="PTHR14987">
    <property type="entry name" value="PROTEIN LBH-RELATED"/>
    <property type="match status" value="1"/>
</dbReference>
<dbReference type="Pfam" id="PF15317">
    <property type="entry name" value="Lbh"/>
    <property type="match status" value="1"/>
</dbReference>